<protein>
    <recommendedName>
        <fullName evidence="2">N-acetylneuraminate lyase</fullName>
        <shortName evidence="2">NAL</shortName>
        <shortName evidence="2">Neu5Ac lyase</shortName>
        <ecNumber evidence="2">4.1.3.3</ecNumber>
    </recommendedName>
    <alternativeName>
        <fullName evidence="2">N-acetylneuraminate pyruvate-lyase</fullName>
    </alternativeName>
    <alternativeName>
        <fullName evidence="2">N-acetylneuraminic acid aldolase</fullName>
    </alternativeName>
    <alternativeName>
        <fullName evidence="2">Sialate lyase</fullName>
    </alternativeName>
    <alternativeName>
        <fullName evidence="2">Sialic acid aldolase</fullName>
    </alternativeName>
    <alternativeName>
        <fullName evidence="2">Sialic acid lyase</fullName>
    </alternativeName>
</protein>
<evidence type="ECO:0000250" key="1"/>
<evidence type="ECO:0000255" key="2">
    <source>
        <dbReference type="HAMAP-Rule" id="MF_01237"/>
    </source>
</evidence>
<evidence type="ECO:0000305" key="3"/>
<reference key="1">
    <citation type="journal article" date="2001" name="Nature">
        <title>Genome sequence of enterohaemorrhagic Escherichia coli O157:H7.</title>
        <authorList>
            <person name="Perna N.T."/>
            <person name="Plunkett G. III"/>
            <person name="Burland V."/>
            <person name="Mau B."/>
            <person name="Glasner J.D."/>
            <person name="Rose D.J."/>
            <person name="Mayhew G.F."/>
            <person name="Evans P.S."/>
            <person name="Gregor J."/>
            <person name="Kirkpatrick H.A."/>
            <person name="Posfai G."/>
            <person name="Hackett J."/>
            <person name="Klink S."/>
            <person name="Boutin A."/>
            <person name="Shao Y."/>
            <person name="Miller L."/>
            <person name="Grotbeck E.J."/>
            <person name="Davis N.W."/>
            <person name="Lim A."/>
            <person name="Dimalanta E.T."/>
            <person name="Potamousis K."/>
            <person name="Apodaca J."/>
            <person name="Anantharaman T.S."/>
            <person name="Lin J."/>
            <person name="Yen G."/>
            <person name="Schwartz D.C."/>
            <person name="Welch R.A."/>
            <person name="Blattner F.R."/>
        </authorList>
    </citation>
    <scope>NUCLEOTIDE SEQUENCE [LARGE SCALE GENOMIC DNA]</scope>
    <source>
        <strain>O157:H7 / EDL933 / ATCC 700927 / EHEC</strain>
    </source>
</reference>
<reference key="2">
    <citation type="journal article" date="2001" name="DNA Res.">
        <title>Complete genome sequence of enterohemorrhagic Escherichia coli O157:H7 and genomic comparison with a laboratory strain K-12.</title>
        <authorList>
            <person name="Hayashi T."/>
            <person name="Makino K."/>
            <person name="Ohnishi M."/>
            <person name="Kurokawa K."/>
            <person name="Ishii K."/>
            <person name="Yokoyama K."/>
            <person name="Han C.-G."/>
            <person name="Ohtsubo E."/>
            <person name="Nakayama K."/>
            <person name="Murata T."/>
            <person name="Tanaka M."/>
            <person name="Tobe T."/>
            <person name="Iida T."/>
            <person name="Takami H."/>
            <person name="Honda T."/>
            <person name="Sasakawa C."/>
            <person name="Ogasawara N."/>
            <person name="Yasunaga T."/>
            <person name="Kuhara S."/>
            <person name="Shiba T."/>
            <person name="Hattori M."/>
            <person name="Shinagawa H."/>
        </authorList>
    </citation>
    <scope>NUCLEOTIDE SEQUENCE [LARGE SCALE GENOMIC DNA]</scope>
    <source>
        <strain>O157:H7 / Sakai / RIMD 0509952 / EHEC</strain>
    </source>
</reference>
<gene>
    <name evidence="2" type="primary">nanA</name>
    <name type="ordered locus">Z4583</name>
    <name type="ordered locus">ECs4098</name>
</gene>
<proteinExistence type="inferred from homology"/>
<comment type="function">
    <text evidence="2">Catalyzes the reversible aldol cleavage of N-acetylneuraminic acid (sialic acid; Neu5Ac) to form pyruvate and N-acetylmannosamine (ManNAc) via a Schiff base intermediate.</text>
</comment>
<comment type="catalytic activity">
    <reaction evidence="2">
        <text>aceneuramate = aldehydo-N-acetyl-D-mannosamine + pyruvate</text>
        <dbReference type="Rhea" id="RHEA:23296"/>
        <dbReference type="ChEBI" id="CHEBI:15361"/>
        <dbReference type="ChEBI" id="CHEBI:17122"/>
        <dbReference type="ChEBI" id="CHEBI:173083"/>
        <dbReference type="EC" id="4.1.3.3"/>
    </reaction>
</comment>
<comment type="pathway">
    <text evidence="2">Amino-sugar metabolism; N-acetylneuraminate degradation; D-fructose 6-phosphate from N-acetylneuraminate: step 1/5.</text>
</comment>
<comment type="subunit">
    <text evidence="2">Homotetramer.</text>
</comment>
<comment type="subcellular location">
    <subcellularLocation>
        <location evidence="2">Cytoplasm</location>
    </subcellularLocation>
</comment>
<comment type="similarity">
    <text evidence="2 3">Belongs to the DapA family. NanA subfamily.</text>
</comment>
<name>NANA_ECO57</name>
<organism>
    <name type="scientific">Escherichia coli O157:H7</name>
    <dbReference type="NCBI Taxonomy" id="83334"/>
    <lineage>
        <taxon>Bacteria</taxon>
        <taxon>Pseudomonadati</taxon>
        <taxon>Pseudomonadota</taxon>
        <taxon>Gammaproteobacteria</taxon>
        <taxon>Enterobacterales</taxon>
        <taxon>Enterobacteriaceae</taxon>
        <taxon>Escherichia</taxon>
    </lineage>
</organism>
<accession>P0A6L5</accession>
<accession>P06995</accession>
<keyword id="KW-0119">Carbohydrate metabolism</keyword>
<keyword id="KW-0963">Cytoplasm</keyword>
<keyword id="KW-0456">Lyase</keyword>
<keyword id="KW-1185">Reference proteome</keyword>
<keyword id="KW-0704">Schiff base</keyword>
<dbReference type="EC" id="4.1.3.3" evidence="2"/>
<dbReference type="EMBL" id="AE005174">
    <property type="protein sequence ID" value="AAG58353.1"/>
    <property type="molecule type" value="Genomic_DNA"/>
</dbReference>
<dbReference type="EMBL" id="BA000007">
    <property type="protein sequence ID" value="BAB37521.1"/>
    <property type="molecule type" value="Genomic_DNA"/>
</dbReference>
<dbReference type="PIR" id="B91141">
    <property type="entry name" value="B91141"/>
</dbReference>
<dbReference type="PIR" id="E85986">
    <property type="entry name" value="E85986"/>
</dbReference>
<dbReference type="RefSeq" id="NP_312125.1">
    <property type="nucleotide sequence ID" value="NC_002695.1"/>
</dbReference>
<dbReference type="RefSeq" id="WP_000224714.1">
    <property type="nucleotide sequence ID" value="NZ_VOAI01000014.1"/>
</dbReference>
<dbReference type="SMR" id="P0A6L5"/>
<dbReference type="STRING" id="155864.Z4583"/>
<dbReference type="GeneID" id="916053"/>
<dbReference type="GeneID" id="93778761"/>
<dbReference type="KEGG" id="ece:Z4583"/>
<dbReference type="KEGG" id="ecs:ECs_4098"/>
<dbReference type="PATRIC" id="fig|386585.9.peg.4278"/>
<dbReference type="eggNOG" id="COG0329">
    <property type="taxonomic scope" value="Bacteria"/>
</dbReference>
<dbReference type="HOGENOM" id="CLU_049343_6_0_6"/>
<dbReference type="OMA" id="YWNAISA"/>
<dbReference type="UniPathway" id="UPA00629">
    <property type="reaction ID" value="UER00680"/>
</dbReference>
<dbReference type="Proteomes" id="UP000000558">
    <property type="component" value="Chromosome"/>
</dbReference>
<dbReference type="Proteomes" id="UP000002519">
    <property type="component" value="Chromosome"/>
</dbReference>
<dbReference type="GO" id="GO:0005829">
    <property type="term" value="C:cytosol"/>
    <property type="evidence" value="ECO:0007669"/>
    <property type="project" value="TreeGrafter"/>
</dbReference>
<dbReference type="GO" id="GO:0008747">
    <property type="term" value="F:N-acetylneuraminate lyase activity"/>
    <property type="evidence" value="ECO:0007669"/>
    <property type="project" value="UniProtKB-UniRule"/>
</dbReference>
<dbReference type="GO" id="GO:0005975">
    <property type="term" value="P:carbohydrate metabolic process"/>
    <property type="evidence" value="ECO:0007669"/>
    <property type="project" value="UniProtKB-UniRule"/>
</dbReference>
<dbReference type="GO" id="GO:0019262">
    <property type="term" value="P:N-acetylneuraminate catabolic process"/>
    <property type="evidence" value="ECO:0007669"/>
    <property type="project" value="UniProtKB-UniRule"/>
</dbReference>
<dbReference type="CDD" id="cd00954">
    <property type="entry name" value="NAL"/>
    <property type="match status" value="1"/>
</dbReference>
<dbReference type="FunFam" id="3.20.20.70:FF:000039">
    <property type="entry name" value="N-acetylneuraminate lyase"/>
    <property type="match status" value="1"/>
</dbReference>
<dbReference type="Gene3D" id="3.20.20.70">
    <property type="entry name" value="Aldolase class I"/>
    <property type="match status" value="1"/>
</dbReference>
<dbReference type="HAMAP" id="MF_01237">
    <property type="entry name" value="N_acetylneuram_lyase"/>
    <property type="match status" value="1"/>
</dbReference>
<dbReference type="InterPro" id="IPR013785">
    <property type="entry name" value="Aldolase_TIM"/>
</dbReference>
<dbReference type="InterPro" id="IPR002220">
    <property type="entry name" value="DapA-like"/>
</dbReference>
<dbReference type="InterPro" id="IPR005264">
    <property type="entry name" value="NanA"/>
</dbReference>
<dbReference type="InterPro" id="IPR020625">
    <property type="entry name" value="Schiff_base-form_aldolases_AS"/>
</dbReference>
<dbReference type="InterPro" id="IPR020624">
    <property type="entry name" value="Schiff_base-form_aldolases_CS"/>
</dbReference>
<dbReference type="NCBIfam" id="TIGR00683">
    <property type="entry name" value="nanA"/>
    <property type="match status" value="1"/>
</dbReference>
<dbReference type="NCBIfam" id="NF003164">
    <property type="entry name" value="PRK04147.1"/>
    <property type="match status" value="1"/>
</dbReference>
<dbReference type="PANTHER" id="PTHR42849">
    <property type="entry name" value="N-ACETYLNEURAMINATE LYASE"/>
    <property type="match status" value="1"/>
</dbReference>
<dbReference type="PANTHER" id="PTHR42849:SF1">
    <property type="entry name" value="N-ACETYLNEURAMINATE LYASE"/>
    <property type="match status" value="1"/>
</dbReference>
<dbReference type="Pfam" id="PF00701">
    <property type="entry name" value="DHDPS"/>
    <property type="match status" value="1"/>
</dbReference>
<dbReference type="PIRSF" id="PIRSF001365">
    <property type="entry name" value="DHDPS"/>
    <property type="match status" value="1"/>
</dbReference>
<dbReference type="PRINTS" id="PR00146">
    <property type="entry name" value="DHPICSNTHASE"/>
</dbReference>
<dbReference type="SMART" id="SM01130">
    <property type="entry name" value="DHDPS"/>
    <property type="match status" value="1"/>
</dbReference>
<dbReference type="SUPFAM" id="SSF51569">
    <property type="entry name" value="Aldolase"/>
    <property type="match status" value="1"/>
</dbReference>
<dbReference type="PROSITE" id="PS00665">
    <property type="entry name" value="DHDPS_1"/>
    <property type="match status" value="1"/>
</dbReference>
<dbReference type="PROSITE" id="PS00666">
    <property type="entry name" value="DHDPS_2"/>
    <property type="match status" value="1"/>
</dbReference>
<sequence>MATNLRGVMAALLTPFDQQQALDKASLRRLVQFNIQQGIDGLYVGGSTGEAFVQSLSEREQVLEIVAEEAKGKIKLIAHVGCVSTAESQQLAASAKRYGFDAVSAVTPFYYPFSFEEHCDHYRAIIDSADGLPMVVYNIPALSGVKLTLDQINTLVTLPGVGALKQTSGDLYQMEQIRREHPDLVLYNGYDEIFASGLLAGADGGIGSTYNIMGWRYQGIVKALKEGDIQTAQKLQTECNKVIDLLIKTGVFRGLKTVLHYMDVVSVPLCRKPFGPVDEKYLPELKALAQQLMQERG</sequence>
<feature type="initiator methionine" description="Removed" evidence="1">
    <location>
        <position position="1"/>
    </location>
</feature>
<feature type="chain" id="PRO_0000103212" description="N-acetylneuraminate lyase">
    <location>
        <begin position="2"/>
        <end position="297"/>
    </location>
</feature>
<feature type="active site" description="Proton donor" evidence="2">
    <location>
        <position position="137"/>
    </location>
</feature>
<feature type="active site" description="Schiff-base intermediate with substrate" evidence="2">
    <location>
        <position position="165"/>
    </location>
</feature>
<feature type="binding site" evidence="2">
    <location>
        <position position="47"/>
    </location>
    <ligand>
        <name>aceneuramate</name>
        <dbReference type="ChEBI" id="CHEBI:173083"/>
    </ligand>
</feature>
<feature type="binding site" evidence="2">
    <location>
        <position position="48"/>
    </location>
    <ligand>
        <name>aceneuramate</name>
        <dbReference type="ChEBI" id="CHEBI:173083"/>
    </ligand>
</feature>
<feature type="binding site" evidence="2">
    <location>
        <position position="167"/>
    </location>
    <ligand>
        <name>aceneuramate</name>
        <dbReference type="ChEBI" id="CHEBI:173083"/>
    </ligand>
</feature>
<feature type="binding site" evidence="2">
    <location>
        <position position="189"/>
    </location>
    <ligand>
        <name>aceneuramate</name>
        <dbReference type="ChEBI" id="CHEBI:173083"/>
    </ligand>
</feature>
<feature type="binding site" evidence="2">
    <location>
        <position position="191"/>
    </location>
    <ligand>
        <name>aceneuramate</name>
        <dbReference type="ChEBI" id="CHEBI:173083"/>
    </ligand>
</feature>
<feature type="binding site" evidence="2">
    <location>
        <position position="192"/>
    </location>
    <ligand>
        <name>aceneuramate</name>
        <dbReference type="ChEBI" id="CHEBI:173083"/>
    </ligand>
</feature>
<feature type="binding site" evidence="2">
    <location>
        <position position="208"/>
    </location>
    <ligand>
        <name>aceneuramate</name>
        <dbReference type="ChEBI" id="CHEBI:173083"/>
    </ligand>
</feature>